<reference key="1">
    <citation type="journal article" date="2011" name="J. Bacteriol.">
        <title>Comparative genomics of 28 Salmonella enterica isolates: evidence for CRISPR-mediated adaptive sublineage evolution.</title>
        <authorList>
            <person name="Fricke W.F."/>
            <person name="Mammel M.K."/>
            <person name="McDermott P.F."/>
            <person name="Tartera C."/>
            <person name="White D.G."/>
            <person name="Leclerc J.E."/>
            <person name="Ravel J."/>
            <person name="Cebula T.A."/>
        </authorList>
    </citation>
    <scope>NUCLEOTIDE SEQUENCE [LARGE SCALE GENOMIC DNA]</scope>
    <source>
        <strain>CT_02021853</strain>
    </source>
</reference>
<evidence type="ECO:0000255" key="1">
    <source>
        <dbReference type="HAMAP-Rule" id="MF_01561"/>
    </source>
</evidence>
<proteinExistence type="inferred from homology"/>
<feature type="chain" id="PRO_1000147141" description="Probable phosphatase YcdX">
    <location>
        <begin position="1"/>
        <end position="245"/>
    </location>
</feature>
<feature type="binding site" evidence="1">
    <location>
        <position position="7"/>
    </location>
    <ligand>
        <name>Zn(2+)</name>
        <dbReference type="ChEBI" id="CHEBI:29105"/>
        <label>1</label>
    </ligand>
</feature>
<feature type="binding site" evidence="1">
    <location>
        <position position="9"/>
    </location>
    <ligand>
        <name>Zn(2+)</name>
        <dbReference type="ChEBI" id="CHEBI:29105"/>
        <label>1</label>
    </ligand>
</feature>
<feature type="binding site" evidence="1">
    <location>
        <position position="15"/>
    </location>
    <ligand>
        <name>Zn(2+)</name>
        <dbReference type="ChEBI" id="CHEBI:29105"/>
        <label>2</label>
    </ligand>
</feature>
<feature type="binding site" evidence="1">
    <location>
        <position position="40"/>
    </location>
    <ligand>
        <name>Zn(2+)</name>
        <dbReference type="ChEBI" id="CHEBI:29105"/>
        <label>2</label>
    </ligand>
</feature>
<feature type="binding site" evidence="1">
    <location>
        <position position="73"/>
    </location>
    <ligand>
        <name>Zn(2+)</name>
        <dbReference type="ChEBI" id="CHEBI:29105"/>
        <label>1</label>
    </ligand>
</feature>
<feature type="binding site" evidence="1">
    <location>
        <position position="73"/>
    </location>
    <ligand>
        <name>Zn(2+)</name>
        <dbReference type="ChEBI" id="CHEBI:29105"/>
        <label>3</label>
    </ligand>
</feature>
<feature type="binding site" evidence="1">
    <location>
        <position position="101"/>
    </location>
    <ligand>
        <name>Zn(2+)</name>
        <dbReference type="ChEBI" id="CHEBI:29105"/>
        <label>3</label>
    </ligand>
</feature>
<feature type="binding site" evidence="1">
    <location>
        <position position="131"/>
    </location>
    <ligand>
        <name>Zn(2+)</name>
        <dbReference type="ChEBI" id="CHEBI:29105"/>
        <label>3</label>
    </ligand>
</feature>
<feature type="binding site" evidence="1">
    <location>
        <position position="192"/>
    </location>
    <ligand>
        <name>Zn(2+)</name>
        <dbReference type="ChEBI" id="CHEBI:29105"/>
        <label>1</label>
    </ligand>
</feature>
<feature type="binding site" evidence="1">
    <location>
        <position position="194"/>
    </location>
    <ligand>
        <name>Zn(2+)</name>
        <dbReference type="ChEBI" id="CHEBI:29105"/>
        <label>2</label>
    </ligand>
</feature>
<protein>
    <recommendedName>
        <fullName evidence="1">Probable phosphatase YcdX</fullName>
        <ecNumber evidence="1">3.1.3.-</ecNumber>
    </recommendedName>
</protein>
<keyword id="KW-0378">Hydrolase</keyword>
<keyword id="KW-0479">Metal-binding</keyword>
<keyword id="KW-0862">Zinc</keyword>
<comment type="cofactor">
    <cofactor evidence="1">
        <name>Zn(2+)</name>
        <dbReference type="ChEBI" id="CHEBI:29105"/>
    </cofactor>
    <text evidence="1">Binds 3 Zn(2+) ions per subunit.</text>
</comment>
<comment type="subunit">
    <text evidence="1">Homotrimer.</text>
</comment>
<comment type="similarity">
    <text evidence="1">Belongs to the PHP family.</text>
</comment>
<gene>
    <name evidence="1" type="primary">ycdX</name>
    <name type="ordered locus">SeD_A2237</name>
</gene>
<sequence length="245" mass="26906">MYPVDLHMHTVASTHAYSTLSDYIAEAKRKGIKLFAITDHGPDMEDAPHHWHFINMRIWPRLVDGVGILRGIEANIKNINGEIDCSGKMFDSLDLIIAGFHEPVFAPHDKETNTQAMIATIASGKVHIISHPGNPKYPVEVKAIAQAAAKHHVALEINNSSFLHSRKGSEDNCRAVAAAVRDAGGWVALGSDSHTAFTLGDFTECRKILDAVNFPEDRILNVSPQRLLAFLESRGMAPVPEFAEL</sequence>
<accession>B5FL29</accession>
<dbReference type="EC" id="3.1.3.-" evidence="1"/>
<dbReference type="EMBL" id="CP001144">
    <property type="protein sequence ID" value="ACH76034.1"/>
    <property type="molecule type" value="Genomic_DNA"/>
</dbReference>
<dbReference type="RefSeq" id="WP_000283643.1">
    <property type="nucleotide sequence ID" value="NC_011205.1"/>
</dbReference>
<dbReference type="SMR" id="B5FL29"/>
<dbReference type="KEGG" id="sed:SeD_A2237"/>
<dbReference type="HOGENOM" id="CLU_061999_0_1_6"/>
<dbReference type="Proteomes" id="UP000008322">
    <property type="component" value="Chromosome"/>
</dbReference>
<dbReference type="GO" id="GO:0005829">
    <property type="term" value="C:cytosol"/>
    <property type="evidence" value="ECO:0007669"/>
    <property type="project" value="TreeGrafter"/>
</dbReference>
<dbReference type="GO" id="GO:0016791">
    <property type="term" value="F:phosphatase activity"/>
    <property type="evidence" value="ECO:0007669"/>
    <property type="project" value="UniProtKB-UniRule"/>
</dbReference>
<dbReference type="GO" id="GO:0008270">
    <property type="term" value="F:zinc ion binding"/>
    <property type="evidence" value="ECO:0007669"/>
    <property type="project" value="UniProtKB-UniRule"/>
</dbReference>
<dbReference type="GO" id="GO:0071978">
    <property type="term" value="P:bacterial-type flagellum-dependent swarming motility"/>
    <property type="evidence" value="ECO:0007669"/>
    <property type="project" value="TreeGrafter"/>
</dbReference>
<dbReference type="CDD" id="cd07437">
    <property type="entry name" value="PHP_HisPPase_Ycdx_like"/>
    <property type="match status" value="1"/>
</dbReference>
<dbReference type="FunFam" id="3.20.20.140:FF:000008">
    <property type="entry name" value="Probable phosphatase YcdX"/>
    <property type="match status" value="1"/>
</dbReference>
<dbReference type="Gene3D" id="3.20.20.140">
    <property type="entry name" value="Metal-dependent hydrolases"/>
    <property type="match status" value="1"/>
</dbReference>
<dbReference type="HAMAP" id="MF_01561">
    <property type="entry name" value="YcdX_phosphat"/>
    <property type="match status" value="1"/>
</dbReference>
<dbReference type="InterPro" id="IPR023710">
    <property type="entry name" value="Phosphatase_YcdX_put"/>
</dbReference>
<dbReference type="InterPro" id="IPR004013">
    <property type="entry name" value="PHP_dom"/>
</dbReference>
<dbReference type="InterPro" id="IPR050243">
    <property type="entry name" value="PHP_phosphatase"/>
</dbReference>
<dbReference type="InterPro" id="IPR003141">
    <property type="entry name" value="Pol/His_phosphatase_N"/>
</dbReference>
<dbReference type="InterPro" id="IPR016195">
    <property type="entry name" value="Pol/histidinol_Pase-like"/>
</dbReference>
<dbReference type="NCBIfam" id="NF006702">
    <property type="entry name" value="PRK09248.1"/>
    <property type="match status" value="1"/>
</dbReference>
<dbReference type="PANTHER" id="PTHR36928">
    <property type="entry name" value="PHOSPHATASE YCDX-RELATED"/>
    <property type="match status" value="1"/>
</dbReference>
<dbReference type="PANTHER" id="PTHR36928:SF1">
    <property type="entry name" value="PHOSPHATASE YCDX-RELATED"/>
    <property type="match status" value="1"/>
</dbReference>
<dbReference type="Pfam" id="PF02811">
    <property type="entry name" value="PHP"/>
    <property type="match status" value="1"/>
</dbReference>
<dbReference type="SMART" id="SM00481">
    <property type="entry name" value="POLIIIAc"/>
    <property type="match status" value="1"/>
</dbReference>
<dbReference type="SUPFAM" id="SSF89550">
    <property type="entry name" value="PHP domain-like"/>
    <property type="match status" value="1"/>
</dbReference>
<organism>
    <name type="scientific">Salmonella dublin (strain CT_02021853)</name>
    <dbReference type="NCBI Taxonomy" id="439851"/>
    <lineage>
        <taxon>Bacteria</taxon>
        <taxon>Pseudomonadati</taxon>
        <taxon>Pseudomonadota</taxon>
        <taxon>Gammaproteobacteria</taxon>
        <taxon>Enterobacterales</taxon>
        <taxon>Enterobacteriaceae</taxon>
        <taxon>Salmonella</taxon>
    </lineage>
</organism>
<name>YCDX_SALDC</name>